<protein>
    <recommendedName>
        <fullName evidence="2">Polymerase acidic protein</fullName>
        <ecNumber evidence="2">3.1.-.-</ecNumber>
    </recommendedName>
    <alternativeName>
        <fullName evidence="2">RNA-directed RNA polymerase subunit P2</fullName>
    </alternativeName>
</protein>
<name>PA_I35A3</name>
<evidence type="ECO:0000250" key="1">
    <source>
        <dbReference type="UniProtKB" id="P03433"/>
    </source>
</evidence>
<evidence type="ECO:0000255" key="2">
    <source>
        <dbReference type="HAMAP-Rule" id="MF_04063"/>
    </source>
</evidence>
<organism>
    <name type="scientific">Influenza A virus (strain A/USA:Phila/1935 H1N1)</name>
    <dbReference type="NCBI Taxonomy" id="425570"/>
    <lineage>
        <taxon>Viruses</taxon>
        <taxon>Riboviria</taxon>
        <taxon>Orthornavirae</taxon>
        <taxon>Negarnaviricota</taxon>
        <taxon>Polyploviricotina</taxon>
        <taxon>Insthoviricetes</taxon>
        <taxon>Articulavirales</taxon>
        <taxon>Orthomyxoviridae</taxon>
        <taxon>Alphainfluenzavirus</taxon>
        <taxon>Alphainfluenzavirus influenzae</taxon>
        <taxon>Influenza A virus</taxon>
    </lineage>
</organism>
<comment type="function">
    <text evidence="2">Plays an essential role in viral RNA transcription and replication by forming the heterotrimeric polymerase complex together with PB1 and PB2 subunits. The complex transcribes viral mRNAs by using a unique mechanism called cap-snatching. It consists in the hijacking and cleavage of host capped pre-mRNAs. These short capped RNAs are then used as primers for viral mRNAs. The PB2 subunit is responsible for the binding of the 5' cap of cellular pre-mRNAs which are subsequently cleaved after 10-13 nucleotides by the PA subunit that carries the endonuclease activity.</text>
</comment>
<comment type="cofactor">
    <cofactor evidence="2">
        <name>Mn(2+)</name>
        <dbReference type="ChEBI" id="CHEBI:29035"/>
    </cofactor>
    <text evidence="2">Binds 2 manganese ions per subunit.</text>
</comment>
<comment type="subunit">
    <text evidence="1 2">Influenza RNA polymerase is composed of three subunits: PB1, PB2 and PA. Interacts (via C-terminus) with PB1 (via N-terminus).</text>
</comment>
<comment type="subcellular location">
    <subcellularLocation>
        <location evidence="2">Host cytoplasm</location>
    </subcellularLocation>
    <subcellularLocation>
        <location evidence="2">Host nucleus</location>
    </subcellularLocation>
    <text evidence="1 2">PB1 and PA are transported in the host nucleus as a complex.</text>
</comment>
<comment type="alternative products">
    <event type="ribosomal frameshifting"/>
    <isoform>
        <id>A4GCM6-1</id>
        <name>PA</name>
        <sequence type="displayed"/>
    </isoform>
    <isoform>
        <id>P0DJW5-1</id>
        <name>PA-X</name>
        <sequence type="external"/>
    </isoform>
</comment>
<comment type="PTM">
    <text evidence="1 2">Phosphorylated on serines and threonines by host kinases, including human casein kinase II.</text>
</comment>
<comment type="similarity">
    <text evidence="2">Belongs to the influenza viruses PA family.</text>
</comment>
<sequence>MEDFVRQCFNPMIVELAEKTMKEYGEDLKIETNKFAAICTHLEVCFMYSDFHFINEQGESIIVELGDPNALLKHRFEIIEGRDRTVAWTVVNSICNTTGAEKPKFLPDLYDYKENRFIEIGVTRREVHIYYLEKANKTKSEKTHIHIFSFTGEEMATKADYTLDEESRARIKTRLFTIRQEMASRGLWDSFRQSERGEETIEERFEITGTMRKLADQSLPPNFSSLENFRAYVDGFEPNGYIEGKLSQMSKEVNARIEPFLKTTPRPLRLPNGPPCSQRSKFLLMDALKLSIEDPSHEGEGIPLYDAIKCMRTFFGWKEPNVVKPHEKGINPNYLLSWKQVLAELQDIENEEKIPKTKNMKKTSQLKWALGENMAPEKVDFDDCKDVGDLKQYDSDEPELRSLASWIQNEFNKACELTDSSWIELDEIGEDVAPIEHIASMRRNYFTSEVSHCRATEYIMKGVYINTALLNASCAAMDDFQLIPMISKCRTKEGRRKTNLYGFIIKGRSHLRNDTDVVNFVSMEFSLTDPRLEPHKWEKYCVLEIGDMLLRSTIGRVSRPMFLYVRTNGTSKIKMKWGMEMRRCLLQSLQQIESMIEAESSVKEKDMTKEFFENKSETWPIGESPKGVEEGSIGKVCRTLLAKSVFNSLYASPQLEGFSAESRKLLLIVQALRDNLEPGTFDLGGLYEAVEECLINDPWVLLNASWFNSFLTHALR</sequence>
<organismHost>
    <name type="scientific">Aves</name>
    <dbReference type="NCBI Taxonomy" id="8782"/>
</organismHost>
<organismHost>
    <name type="scientific">Homo sapiens</name>
    <name type="common">Human</name>
    <dbReference type="NCBI Taxonomy" id="9606"/>
</organismHost>
<organismHost>
    <name type="scientific">Sus scrofa</name>
    <name type="common">Pig</name>
    <dbReference type="NCBI Taxonomy" id="9823"/>
</organismHost>
<accession>A4GCM6</accession>
<gene>
    <name evidence="2" type="primary">PA</name>
</gene>
<dbReference type="EC" id="3.1.-.-" evidence="2"/>
<dbReference type="EMBL" id="CY020474">
    <property type="protein sequence ID" value="ABO38391.1"/>
    <property type="molecule type" value="Viral_cRNA"/>
</dbReference>
<dbReference type="SMR" id="A4GCM6"/>
<dbReference type="MEROPS" id="S62.001"/>
<dbReference type="Proteomes" id="UP000000829">
    <property type="component" value="Genome"/>
</dbReference>
<dbReference type="GO" id="GO:0030430">
    <property type="term" value="C:host cell cytoplasm"/>
    <property type="evidence" value="ECO:0007669"/>
    <property type="project" value="UniProtKB-SubCell"/>
</dbReference>
<dbReference type="GO" id="GO:0042025">
    <property type="term" value="C:host cell nucleus"/>
    <property type="evidence" value="ECO:0007669"/>
    <property type="project" value="UniProtKB-SubCell"/>
</dbReference>
<dbReference type="GO" id="GO:0004519">
    <property type="term" value="F:endonuclease activity"/>
    <property type="evidence" value="ECO:0007669"/>
    <property type="project" value="UniProtKB-KW"/>
</dbReference>
<dbReference type="GO" id="GO:0046872">
    <property type="term" value="F:metal ion binding"/>
    <property type="evidence" value="ECO:0007669"/>
    <property type="project" value="UniProtKB-KW"/>
</dbReference>
<dbReference type="GO" id="GO:0003723">
    <property type="term" value="F:RNA binding"/>
    <property type="evidence" value="ECO:0007669"/>
    <property type="project" value="UniProtKB-UniRule"/>
</dbReference>
<dbReference type="GO" id="GO:0075526">
    <property type="term" value="P:cap snatching"/>
    <property type="evidence" value="ECO:0007669"/>
    <property type="project" value="UniProtKB-UniRule"/>
</dbReference>
<dbReference type="GO" id="GO:0006351">
    <property type="term" value="P:DNA-templated transcription"/>
    <property type="evidence" value="ECO:0007669"/>
    <property type="project" value="UniProtKB-UniRule"/>
</dbReference>
<dbReference type="GO" id="GO:0039657">
    <property type="term" value="P:symbiont-mediated suppression of host gene expression"/>
    <property type="evidence" value="ECO:0007669"/>
    <property type="project" value="UniProtKB-KW"/>
</dbReference>
<dbReference type="GO" id="GO:0039523">
    <property type="term" value="P:symbiont-mediated suppression of host mRNA transcription via inhibition of RNA polymerase II activity"/>
    <property type="evidence" value="ECO:0007669"/>
    <property type="project" value="UniProtKB-UniRule"/>
</dbReference>
<dbReference type="GO" id="GO:0039694">
    <property type="term" value="P:viral RNA genome replication"/>
    <property type="evidence" value="ECO:0007669"/>
    <property type="project" value="InterPro"/>
</dbReference>
<dbReference type="GO" id="GO:0075523">
    <property type="term" value="P:viral translational frameshifting"/>
    <property type="evidence" value="ECO:0007669"/>
    <property type="project" value="UniProtKB-KW"/>
</dbReference>
<dbReference type="FunFam" id="3.40.91.90:FF:000001">
    <property type="entry name" value="Polymerase acidic protein"/>
    <property type="match status" value="1"/>
</dbReference>
<dbReference type="Gene3D" id="3.40.91.90">
    <property type="entry name" value="Influenza RNA-dependent RNA polymerase subunit PA, endonuclease domain"/>
    <property type="match status" value="1"/>
</dbReference>
<dbReference type="HAMAP" id="MF_04063">
    <property type="entry name" value="INFV_PA"/>
    <property type="match status" value="1"/>
</dbReference>
<dbReference type="InterPro" id="IPR037534">
    <property type="entry name" value="INFV_PA"/>
</dbReference>
<dbReference type="InterPro" id="IPR001009">
    <property type="entry name" value="PA/PA-X"/>
</dbReference>
<dbReference type="InterPro" id="IPR038372">
    <property type="entry name" value="PA/PA-X_sf"/>
</dbReference>
<dbReference type="Pfam" id="PF00603">
    <property type="entry name" value="Flu_PA"/>
    <property type="match status" value="1"/>
</dbReference>
<feature type="chain" id="PRO_0000372996" description="Polymerase acidic protein">
    <location>
        <begin position="1"/>
        <end position="716"/>
    </location>
</feature>
<feature type="short sequence motif" description="Nuclear localization signal 1 (NLS1)" evidence="1 2">
    <location>
        <begin position="124"/>
        <end position="139"/>
    </location>
</feature>
<feature type="short sequence motif" description="Nuclear localization signal 2 (NLS2)" evidence="1 2">
    <location>
        <begin position="184"/>
        <end position="247"/>
    </location>
</feature>
<feature type="binding site" evidence="2">
    <location>
        <position position="41"/>
    </location>
    <ligand>
        <name>Mn(2+)</name>
        <dbReference type="ChEBI" id="CHEBI:29035"/>
        <label>1</label>
    </ligand>
</feature>
<feature type="binding site" evidence="2">
    <location>
        <position position="80"/>
    </location>
    <ligand>
        <name>Mn(2+)</name>
        <dbReference type="ChEBI" id="CHEBI:29035"/>
        <label>2</label>
    </ligand>
</feature>
<feature type="binding site" evidence="2">
    <location>
        <position position="108"/>
    </location>
    <ligand>
        <name>Mn(2+)</name>
        <dbReference type="ChEBI" id="CHEBI:29035"/>
        <label>1</label>
    </ligand>
</feature>
<feature type="binding site" evidence="2">
    <location>
        <position position="108"/>
    </location>
    <ligand>
        <name>Mn(2+)</name>
        <dbReference type="ChEBI" id="CHEBI:29035"/>
        <label>2</label>
    </ligand>
</feature>
<feature type="binding site" evidence="2">
    <location>
        <position position="119"/>
    </location>
    <ligand>
        <name>Mn(2+)</name>
        <dbReference type="ChEBI" id="CHEBI:29035"/>
        <label>1</label>
    </ligand>
</feature>
<feature type="binding site" evidence="2">
    <location>
        <position position="120"/>
    </location>
    <ligand>
        <name>Mn(2+)</name>
        <dbReference type="ChEBI" id="CHEBI:29035"/>
        <label>1</label>
    </ligand>
</feature>
<keyword id="KW-1157">Cap snatching</keyword>
<keyword id="KW-0255">Endonuclease</keyword>
<keyword id="KW-1262">Eukaryotic host gene expression shutoff by virus</keyword>
<keyword id="KW-1191">Eukaryotic host transcription shutoff by virus</keyword>
<keyword id="KW-1035">Host cytoplasm</keyword>
<keyword id="KW-1190">Host gene expression shutoff by virus</keyword>
<keyword id="KW-1048">Host nucleus</keyword>
<keyword id="KW-0945">Host-virus interaction</keyword>
<keyword id="KW-0378">Hydrolase</keyword>
<keyword id="KW-1104">Inhibition of host RNA polymerase II by virus</keyword>
<keyword id="KW-0464">Manganese</keyword>
<keyword id="KW-0479">Metal-binding</keyword>
<keyword id="KW-0540">Nuclease</keyword>
<keyword id="KW-0597">Phosphoprotein</keyword>
<keyword id="KW-0688">Ribosomal frameshifting</keyword>
<proteinExistence type="inferred from homology"/>
<reference key="1">
    <citation type="submission" date="2007-03" db="EMBL/GenBank/DDBJ databases">
        <title>The NIAID influenza genome sequencing project.</title>
        <authorList>
            <person name="Ghedin E."/>
            <person name="Spiro D."/>
            <person name="Miller N."/>
            <person name="Zaborsky J."/>
            <person name="Feldblyum T."/>
            <person name="Subbu V."/>
            <person name="Shumway M."/>
            <person name="Sparenborg J."/>
            <person name="Groveman L."/>
            <person name="Halpin R."/>
            <person name="Sitz J."/>
            <person name="Koo H."/>
            <person name="Salzberg S.L."/>
            <person name="Webster R.G."/>
            <person name="Hoffmann E."/>
            <person name="Krauss S."/>
            <person name="Naeve C."/>
            <person name="Bao Y."/>
            <person name="Bolotov P."/>
            <person name="Dernovoy D."/>
            <person name="Kiryutin B."/>
            <person name="Lipman D.J."/>
            <person name="Tatusova T."/>
        </authorList>
    </citation>
    <scope>NUCLEOTIDE SEQUENCE [GENOMIC RNA]</scope>
</reference>
<reference key="2">
    <citation type="submission" date="2007-03" db="EMBL/GenBank/DDBJ databases">
        <authorList>
            <consortium name="The NIAID Influenza Genome Sequencing Consortium"/>
        </authorList>
    </citation>
    <scope>NUCLEOTIDE SEQUENCE [GENOMIC RNA]</scope>
</reference>